<protein>
    <recommendedName>
        <fullName evidence="1">NAD(P)H-hydrate epimerase</fullName>
        <ecNumber evidence="1">5.1.99.6</ecNumber>
    </recommendedName>
    <alternativeName>
        <fullName evidence="1">NAD(P)HX epimerase</fullName>
    </alternativeName>
</protein>
<evidence type="ECO:0000255" key="1">
    <source>
        <dbReference type="HAMAP-Rule" id="MF_01966"/>
    </source>
</evidence>
<name>NNRE_LEUKI</name>
<accession>D5T3F2</accession>
<feature type="chain" id="PRO_0000416367" description="NAD(P)H-hydrate epimerase">
    <location>
        <begin position="1"/>
        <end position="225"/>
    </location>
</feature>
<feature type="domain" description="YjeF N-terminal" evidence="1">
    <location>
        <begin position="9"/>
        <end position="209"/>
    </location>
</feature>
<feature type="binding site" evidence="1">
    <location>
        <begin position="57"/>
        <end position="61"/>
    </location>
    <ligand>
        <name>(6S)-NADPHX</name>
        <dbReference type="ChEBI" id="CHEBI:64076"/>
    </ligand>
</feature>
<feature type="binding site" evidence="1">
    <location>
        <position position="58"/>
    </location>
    <ligand>
        <name>K(+)</name>
        <dbReference type="ChEBI" id="CHEBI:29103"/>
    </ligand>
</feature>
<feature type="binding site" evidence="1">
    <location>
        <position position="119"/>
    </location>
    <ligand>
        <name>K(+)</name>
        <dbReference type="ChEBI" id="CHEBI:29103"/>
    </ligand>
</feature>
<feature type="binding site" evidence="1">
    <location>
        <begin position="123"/>
        <end position="129"/>
    </location>
    <ligand>
        <name>(6S)-NADPHX</name>
        <dbReference type="ChEBI" id="CHEBI:64076"/>
    </ligand>
</feature>
<feature type="binding site" evidence="1">
    <location>
        <position position="152"/>
    </location>
    <ligand>
        <name>(6S)-NADPHX</name>
        <dbReference type="ChEBI" id="CHEBI:64076"/>
    </ligand>
</feature>
<feature type="binding site" evidence="1">
    <location>
        <position position="155"/>
    </location>
    <ligand>
        <name>K(+)</name>
        <dbReference type="ChEBI" id="CHEBI:29103"/>
    </ligand>
</feature>
<sequence length="225" mass="24015">MQLVTAAEMQTIDNYTVETIGMPQDVLIERAAMSVIDVIGAGHFNLDHILVLAGLGNNGADGVAISRLLYAQGFNVSLQFVGNVTRAKDSVKRQLDIIEKYGLVRAEKSDFNEATLIIDAIFGTGLNNLLPEGLQKMIKAANHIEKTVIAVDTPTGIDATTGEVRGAALKAHTTVTFGYNKIGLTQRVGGYLSGNVIVKDIGLLTPQDFNFSLPDKENSPSVATS</sequence>
<proteinExistence type="inferred from homology"/>
<organism>
    <name type="scientific">Leuconostoc kimchii (strain IMSNU 11154 / KCTC 2386 / IH25)</name>
    <dbReference type="NCBI Taxonomy" id="762051"/>
    <lineage>
        <taxon>Bacteria</taxon>
        <taxon>Bacillati</taxon>
        <taxon>Bacillota</taxon>
        <taxon>Bacilli</taxon>
        <taxon>Lactobacillales</taxon>
        <taxon>Lactobacillaceae</taxon>
        <taxon>Leuconostoc</taxon>
    </lineage>
</organism>
<gene>
    <name evidence="1" type="primary">nnrE</name>
    <name type="ordered locus">LKI_06305</name>
</gene>
<comment type="function">
    <text evidence="1">Catalyzes the epimerization of the S- and R-forms of NAD(P)HX, a damaged form of NAD(P)H that is a result of enzymatic or heat-dependent hydration. This is a prerequisite for the S-specific NAD(P)H-hydrate dehydratase to allow the repair of both epimers of NAD(P)HX.</text>
</comment>
<comment type="catalytic activity">
    <reaction evidence="1">
        <text>(6R)-NADHX = (6S)-NADHX</text>
        <dbReference type="Rhea" id="RHEA:32215"/>
        <dbReference type="ChEBI" id="CHEBI:64074"/>
        <dbReference type="ChEBI" id="CHEBI:64075"/>
        <dbReference type="EC" id="5.1.99.6"/>
    </reaction>
</comment>
<comment type="catalytic activity">
    <reaction evidence="1">
        <text>(6R)-NADPHX = (6S)-NADPHX</text>
        <dbReference type="Rhea" id="RHEA:32227"/>
        <dbReference type="ChEBI" id="CHEBI:64076"/>
        <dbReference type="ChEBI" id="CHEBI:64077"/>
        <dbReference type="EC" id="5.1.99.6"/>
    </reaction>
</comment>
<comment type="cofactor">
    <cofactor evidence="1">
        <name>K(+)</name>
        <dbReference type="ChEBI" id="CHEBI:29103"/>
    </cofactor>
    <text evidence="1">Binds 1 potassium ion per subunit.</text>
</comment>
<comment type="similarity">
    <text evidence="1">Belongs to the NnrE/AIBP family.</text>
</comment>
<dbReference type="EC" id="5.1.99.6" evidence="1"/>
<dbReference type="EMBL" id="CP001758">
    <property type="protein sequence ID" value="ADG40801.1"/>
    <property type="molecule type" value="Genomic_DNA"/>
</dbReference>
<dbReference type="RefSeq" id="WP_013103396.1">
    <property type="nucleotide sequence ID" value="NC_014136.1"/>
</dbReference>
<dbReference type="SMR" id="D5T3F2"/>
<dbReference type="STRING" id="762051.LKI_06305"/>
<dbReference type="KEGG" id="lki:LKI_06305"/>
<dbReference type="PATRIC" id="fig|762051.18.peg.1270"/>
<dbReference type="eggNOG" id="COG0062">
    <property type="taxonomic scope" value="Bacteria"/>
</dbReference>
<dbReference type="HOGENOM" id="CLU_024853_0_1_9"/>
<dbReference type="OrthoDB" id="9806925at2"/>
<dbReference type="Proteomes" id="UP000002362">
    <property type="component" value="Chromosome"/>
</dbReference>
<dbReference type="GO" id="GO:0000932">
    <property type="term" value="C:P-body"/>
    <property type="evidence" value="ECO:0007669"/>
    <property type="project" value="TreeGrafter"/>
</dbReference>
<dbReference type="GO" id="GO:0046872">
    <property type="term" value="F:metal ion binding"/>
    <property type="evidence" value="ECO:0007669"/>
    <property type="project" value="UniProtKB-KW"/>
</dbReference>
<dbReference type="GO" id="GO:0003729">
    <property type="term" value="F:mRNA binding"/>
    <property type="evidence" value="ECO:0007669"/>
    <property type="project" value="TreeGrafter"/>
</dbReference>
<dbReference type="GO" id="GO:0052856">
    <property type="term" value="F:NAD(P)HX epimerase activity"/>
    <property type="evidence" value="ECO:0007669"/>
    <property type="project" value="UniProtKB-UniRule"/>
</dbReference>
<dbReference type="GO" id="GO:0000166">
    <property type="term" value="F:nucleotide binding"/>
    <property type="evidence" value="ECO:0007669"/>
    <property type="project" value="UniProtKB-KW"/>
</dbReference>
<dbReference type="GO" id="GO:0031087">
    <property type="term" value="P:deadenylation-independent decapping of nuclear-transcribed mRNA"/>
    <property type="evidence" value="ECO:0007669"/>
    <property type="project" value="TreeGrafter"/>
</dbReference>
<dbReference type="GO" id="GO:0033962">
    <property type="term" value="P:P-body assembly"/>
    <property type="evidence" value="ECO:0007669"/>
    <property type="project" value="TreeGrafter"/>
</dbReference>
<dbReference type="Gene3D" id="3.40.50.10260">
    <property type="entry name" value="YjeF N-terminal domain"/>
    <property type="match status" value="1"/>
</dbReference>
<dbReference type="HAMAP" id="MF_01966">
    <property type="entry name" value="NADHX_epimerase"/>
    <property type="match status" value="1"/>
</dbReference>
<dbReference type="InterPro" id="IPR004443">
    <property type="entry name" value="YjeF_N_dom"/>
</dbReference>
<dbReference type="InterPro" id="IPR036652">
    <property type="entry name" value="YjeF_N_dom_sf"/>
</dbReference>
<dbReference type="NCBIfam" id="TIGR00197">
    <property type="entry name" value="yjeF_nterm"/>
    <property type="match status" value="1"/>
</dbReference>
<dbReference type="PANTHER" id="PTHR13612">
    <property type="entry name" value="ENHANCER OF MRNA-DECAPPING PROTEIN 3"/>
    <property type="match status" value="1"/>
</dbReference>
<dbReference type="PANTHER" id="PTHR13612:SF0">
    <property type="entry name" value="ENHANCER OF MRNA-DECAPPING PROTEIN 3"/>
    <property type="match status" value="1"/>
</dbReference>
<dbReference type="Pfam" id="PF03853">
    <property type="entry name" value="YjeF_N"/>
    <property type="match status" value="1"/>
</dbReference>
<dbReference type="SUPFAM" id="SSF64153">
    <property type="entry name" value="YjeF N-terminal domain-like"/>
    <property type="match status" value="1"/>
</dbReference>
<dbReference type="PROSITE" id="PS51385">
    <property type="entry name" value="YJEF_N"/>
    <property type="match status" value="1"/>
</dbReference>
<keyword id="KW-0413">Isomerase</keyword>
<keyword id="KW-0479">Metal-binding</keyword>
<keyword id="KW-0520">NAD</keyword>
<keyword id="KW-0521">NADP</keyword>
<keyword id="KW-0547">Nucleotide-binding</keyword>
<keyword id="KW-0630">Potassium</keyword>
<reference key="1">
    <citation type="journal article" date="2010" name="J. Bacteriol.">
        <title>Complete genome sequence analysis of Leuconostoc kimchii IMSNU 11154.</title>
        <authorList>
            <person name="Oh H.M."/>
            <person name="Cho Y.J."/>
            <person name="Kim B.K."/>
            <person name="Roe J.H."/>
            <person name="Kang S.O."/>
            <person name="Nahm B.H."/>
            <person name="Jeong G."/>
            <person name="Han H.U."/>
            <person name="Chun J."/>
        </authorList>
    </citation>
    <scope>NUCLEOTIDE SEQUENCE [LARGE SCALE GENOMIC DNA]</scope>
    <source>
        <strain>IMSNU 11154 / KCTC 2386 / IH25</strain>
    </source>
</reference>